<keyword id="KW-1003">Cell membrane</keyword>
<keyword id="KW-0472">Membrane</keyword>
<keyword id="KW-1185">Reference proteome</keyword>
<keyword id="KW-0812">Transmembrane</keyword>
<keyword id="KW-1133">Transmembrane helix</keyword>
<feature type="chain" id="PRO_5000134209" description="UPF0182 protein jk1603">
    <location>
        <begin position="1"/>
        <end position="1020"/>
    </location>
</feature>
<feature type="transmembrane region" description="Helical" evidence="1">
    <location>
        <begin position="28"/>
        <end position="48"/>
    </location>
</feature>
<feature type="transmembrane region" description="Helical" evidence="1">
    <location>
        <begin position="73"/>
        <end position="93"/>
    </location>
</feature>
<feature type="transmembrane region" description="Helical" evidence="1">
    <location>
        <begin position="125"/>
        <end position="145"/>
    </location>
</feature>
<feature type="transmembrane region" description="Helical" evidence="1">
    <location>
        <begin position="175"/>
        <end position="195"/>
    </location>
</feature>
<feature type="transmembrane region" description="Helical" evidence="1">
    <location>
        <begin position="227"/>
        <end position="247"/>
    </location>
</feature>
<feature type="transmembrane region" description="Helical" evidence="1">
    <location>
        <begin position="272"/>
        <end position="292"/>
    </location>
</feature>
<feature type="transmembrane region" description="Helical" evidence="1">
    <location>
        <begin position="300"/>
        <end position="320"/>
    </location>
</feature>
<feature type="region of interest" description="Disordered" evidence="2">
    <location>
        <begin position="1"/>
        <end position="23"/>
    </location>
</feature>
<feature type="region of interest" description="Disordered" evidence="2">
    <location>
        <begin position="924"/>
        <end position="998"/>
    </location>
</feature>
<feature type="compositionally biased region" description="Pro residues" evidence="2">
    <location>
        <begin position="1"/>
        <end position="18"/>
    </location>
</feature>
<feature type="compositionally biased region" description="Basic and acidic residues" evidence="2">
    <location>
        <begin position="942"/>
        <end position="961"/>
    </location>
</feature>
<feature type="compositionally biased region" description="Basic and acidic residues" evidence="2">
    <location>
        <begin position="969"/>
        <end position="998"/>
    </location>
</feature>
<reference key="1">
    <citation type="journal article" date="2005" name="J. Bacteriol.">
        <title>Complete genome sequence and analysis of the multiresistant nosocomial pathogen Corynebacterium jeikeium K411, a lipid-requiring bacterium of the human skin flora.</title>
        <authorList>
            <person name="Tauch A."/>
            <person name="Kaiser O."/>
            <person name="Hain T."/>
            <person name="Goesmann A."/>
            <person name="Weisshaar B."/>
            <person name="Albersmeier A."/>
            <person name="Bekel T."/>
            <person name="Bischoff N."/>
            <person name="Brune I."/>
            <person name="Chakraborty T."/>
            <person name="Kalinowski J."/>
            <person name="Meyer F."/>
            <person name="Rupp O."/>
            <person name="Schneiker S."/>
            <person name="Viehoever P."/>
            <person name="Puehler A."/>
        </authorList>
    </citation>
    <scope>NUCLEOTIDE SEQUENCE [LARGE SCALE GENOMIC DNA]</scope>
    <source>
        <strain>K411</strain>
    </source>
</reference>
<evidence type="ECO:0000255" key="1">
    <source>
        <dbReference type="HAMAP-Rule" id="MF_01600"/>
    </source>
</evidence>
<evidence type="ECO:0000256" key="2">
    <source>
        <dbReference type="SAM" id="MobiDB-lite"/>
    </source>
</evidence>
<accession>Q4JTT0</accession>
<gene>
    <name type="ordered locus">jk1603</name>
</gene>
<organism>
    <name type="scientific">Corynebacterium jeikeium (strain K411)</name>
    <dbReference type="NCBI Taxonomy" id="306537"/>
    <lineage>
        <taxon>Bacteria</taxon>
        <taxon>Bacillati</taxon>
        <taxon>Actinomycetota</taxon>
        <taxon>Actinomycetes</taxon>
        <taxon>Mycobacteriales</taxon>
        <taxon>Corynebacteriaceae</taxon>
        <taxon>Corynebacterium</taxon>
    </lineage>
</organism>
<name>Y1603_CORJK</name>
<sequence length="1020" mass="112496">MSTPTPPSSGRPKQPFPSSPGSSRRSKILGILVAIIAIAIFIVPVVVSTYTDFAWFRSVDYQGVFMNVIVTRLVLFVVFGLIGALISWLAAFLAYRARPDEIESLGTSSPLAEYRPLIRRNMRPFLVGIPLFVGVITGMIVQSNWRSVLLFLNGSNFGVHDPQFDKDLGFYAFNLPFLQMLVSTFSVLLILAFVINGIGHYLLGSITTGNPRVGEKASISTNARRQLAVIAGVWMLLKAVGYWFDRYGLLTRSHETFTGASYTDINAVLPAQIVLLVISIFVAAMFFVTIVLRDLRIPALAVALMVGSSLTVGLAWPAMLEQFSVNPNRAEKEREYIARNIEATRYAYGIGDDKVTYDRDWGASGDAASKEQKKAVADDSATLSNVRLLDPEVLTPTFTQQQQLRNFYGFPDELAIDRYEVDGKMRDFVVAARELNPNTLDGNQNDWINRHTVYTHGNGFVAAPSRKVDEVARDVGSARGGYPVYTVADLQSMQSGKQGGELKLDVKQPRIYFGPVIASSNQNNSDYAIVGNTEGEPLEYDTDASNYTYTGTGGVDVSNYFNRLMFSAHFESMNMLLTDRIGEGSKILYERDPRERVHKVAPWLTTDSKTYPIVIDGRVKWVVDGYTTLNNLPYSERIGLTDSTADAINPDGVSETQVVDNEVGYIRNSVKAVVDAYDGSVDLYAFDEADPVLKAWRGAFPGVVKPRSEISKELEDHLRYPEDMFKVQRELIAKYHVSDPGVFFQNDSFWSVPTDPTAPQDRQDNAQPPYYVVAADPETNKPSFQLITPFRGLRREFLAAHMSVGSDPDNYGKINVRVLPTGTQTLGPNQAQDTMMSSDEIARERTLLKGTNDLTNGNLLTLPVGDGQILYVEPVYSQRSGQDSAFPKLLRVLVSYNGQVGYAPTIAEALDQVGIKTSSTTDIQEIDGSVVDPTKDGGSGNKGDKGKDADKDKKSKDEQSSDAKGAAGKSDDKGTDTAPEQRVRDAMDKVNKTRESGTFEEFGKALDELDKAVQDLQSER</sequence>
<proteinExistence type="inferred from homology"/>
<comment type="subcellular location">
    <subcellularLocation>
        <location evidence="1">Cell membrane</location>
        <topology evidence="1">Multi-pass membrane protein</topology>
    </subcellularLocation>
</comment>
<comment type="similarity">
    <text evidence="1">Belongs to the UPF0182 family.</text>
</comment>
<dbReference type="EMBL" id="CR931997">
    <property type="protein sequence ID" value="CAI37777.1"/>
    <property type="molecule type" value="Genomic_DNA"/>
</dbReference>
<dbReference type="RefSeq" id="WP_011273997.1">
    <property type="nucleotide sequence ID" value="NC_007164.1"/>
</dbReference>
<dbReference type="SMR" id="Q4JTT0"/>
<dbReference type="KEGG" id="cjk:jk1603"/>
<dbReference type="PATRIC" id="fig|306537.10.peg.1622"/>
<dbReference type="eggNOG" id="COG1615">
    <property type="taxonomic scope" value="Bacteria"/>
</dbReference>
<dbReference type="HOGENOM" id="CLU_007733_1_0_11"/>
<dbReference type="OrthoDB" id="9763654at2"/>
<dbReference type="Proteomes" id="UP000000545">
    <property type="component" value="Chromosome"/>
</dbReference>
<dbReference type="GO" id="GO:0005576">
    <property type="term" value="C:extracellular region"/>
    <property type="evidence" value="ECO:0007669"/>
    <property type="project" value="TreeGrafter"/>
</dbReference>
<dbReference type="GO" id="GO:0005886">
    <property type="term" value="C:plasma membrane"/>
    <property type="evidence" value="ECO:0007669"/>
    <property type="project" value="UniProtKB-SubCell"/>
</dbReference>
<dbReference type="HAMAP" id="MF_01600">
    <property type="entry name" value="UPF0182"/>
    <property type="match status" value="1"/>
</dbReference>
<dbReference type="InterPro" id="IPR005372">
    <property type="entry name" value="UPF0182"/>
</dbReference>
<dbReference type="NCBIfam" id="NF000825">
    <property type="entry name" value="PRK00068.1"/>
    <property type="match status" value="1"/>
</dbReference>
<dbReference type="PANTHER" id="PTHR39344">
    <property type="entry name" value="UPF0182 PROTEIN SLL1060"/>
    <property type="match status" value="1"/>
</dbReference>
<dbReference type="PANTHER" id="PTHR39344:SF1">
    <property type="entry name" value="UPF0182 PROTEIN SLL1060"/>
    <property type="match status" value="1"/>
</dbReference>
<dbReference type="Pfam" id="PF03699">
    <property type="entry name" value="UPF0182"/>
    <property type="match status" value="1"/>
</dbReference>
<protein>
    <recommendedName>
        <fullName evidence="1">UPF0182 protein jk1603</fullName>
    </recommendedName>
</protein>